<feature type="signal peptide" evidence="1">
    <location>
        <begin position="1"/>
        <end position="20"/>
    </location>
</feature>
<feature type="propeptide" id="PRO_0000032137" evidence="3">
    <location>
        <begin position="21"/>
        <end position="35"/>
    </location>
</feature>
<feature type="chain" id="PRO_0000032138" description="Sweet protein mabinlin-2 chain A">
    <location>
        <begin position="36"/>
        <end position="68"/>
    </location>
</feature>
<feature type="propeptide" id="PRO_0000032139" evidence="3">
    <location>
        <begin position="69"/>
        <end position="82"/>
    </location>
</feature>
<feature type="chain" id="PRO_0000032140" description="Sweet protein mabinlin-2 chain B">
    <location>
        <begin position="83"/>
        <end position="154"/>
    </location>
</feature>
<feature type="propeptide" id="PRO_0000032141">
    <location>
        <position position="155"/>
    </location>
</feature>
<feature type="region of interest" description="Disordered" evidence="2">
    <location>
        <begin position="64"/>
        <end position="86"/>
    </location>
</feature>
<feature type="compositionally biased region" description="Acidic residues" evidence="2">
    <location>
        <begin position="68"/>
        <end position="81"/>
    </location>
</feature>
<feature type="modified residue" description="Pyrrolidone carboxylic acid" evidence="3">
    <location>
        <position position="36"/>
    </location>
</feature>
<feature type="modified residue" description="Pyrrolidone carboxylic acid" evidence="3">
    <location>
        <position position="83"/>
    </location>
</feature>
<feature type="disulfide bond" description="Interchain (between A and B chains)">
    <location>
        <begin position="40"/>
        <end position="103"/>
    </location>
</feature>
<feature type="disulfide bond" description="Interchain (between A and B chains)">
    <location>
        <begin position="53"/>
        <end position="92"/>
    </location>
</feature>
<feature type="disulfide bond">
    <location>
        <begin position="93"/>
        <end position="141"/>
    </location>
</feature>
<feature type="disulfide bond">
    <location>
        <begin position="105"/>
        <end position="149"/>
    </location>
</feature>
<feature type="sequence conflict" description="In Ref. 1; BAA12204." evidence="4" ref="1">
    <original>A</original>
    <variation>T</variation>
    <location>
        <position position="148"/>
    </location>
</feature>
<feature type="sequence conflict" description="In Ref. 1; BAA12204." evidence="4" ref="1">
    <original>A</original>
    <variation>T</variation>
    <location>
        <position position="153"/>
    </location>
</feature>
<feature type="helix" evidence="5">
    <location>
        <begin position="40"/>
        <end position="46"/>
    </location>
</feature>
<feature type="helix" evidence="5">
    <location>
        <begin position="47"/>
        <end position="50"/>
    </location>
</feature>
<feature type="helix" evidence="5">
    <location>
        <begin position="51"/>
        <end position="62"/>
    </location>
</feature>
<feature type="helix" evidence="5">
    <location>
        <begin position="88"/>
        <end position="96"/>
    </location>
</feature>
<feature type="helix" evidence="5">
    <location>
        <begin position="101"/>
        <end position="103"/>
    </location>
</feature>
<feature type="helix" evidence="5">
    <location>
        <begin position="104"/>
        <end position="118"/>
    </location>
</feature>
<feature type="helix" evidence="5">
    <location>
        <begin position="124"/>
        <end position="140"/>
    </location>
</feature>
<reference key="1">
    <citation type="journal article" date="1996" name="Gene">
        <title>Cloning and sequencing of a cDNA encoding a heat-stable sweet protein, mabinlin II.</title>
        <authorList>
            <person name="Nirasawa S."/>
            <person name="Masuda Y."/>
            <person name="Nakaya K."/>
            <person name="Kurihara Y."/>
        </authorList>
    </citation>
    <scope>NUCLEOTIDE SEQUENCE [MRNA]</scope>
    <source>
        <tissue>Seed</tissue>
    </source>
</reference>
<reference key="2">
    <citation type="journal article" date="1993" name="Eur. J. Biochem.">
        <title>Purification, complete amino acid sequence and structural characterization of the heat-stable sweet protein, mabinlin II.</title>
        <authorList>
            <person name="Liu X."/>
            <person name="Maeda S."/>
            <person name="Hu Z."/>
            <person name="Aiuchi T."/>
            <person name="Nakaya K."/>
            <person name="Kurihara Y."/>
        </authorList>
    </citation>
    <scope>PROTEIN SEQUENCE OF 36-68 AND 83-154</scope>
    <scope>PYROGLUTAMATE FORMATION AT GLN-36 AND GLN-83</scope>
    <source>
        <tissue>Seed</tissue>
    </source>
</reference>
<reference key="3">
    <citation type="journal article" date="1993" name="Biochim. Biophys. Acta">
        <title>Disulfide bridge structure of the heat-stable sweet protein mabinlin II.</title>
        <authorList>
            <person name="Nirasawa S."/>
            <person name="Liu X."/>
            <person name="Nishino T."/>
            <person name="Kurihara Y."/>
        </authorList>
    </citation>
    <scope>PARTIAL PROTEIN SEQUENCE</scope>
    <scope>DISULFIDE BONDS</scope>
</reference>
<reference key="4">
    <citation type="journal article" date="2008" name="J. Struct. Biol.">
        <title>Crystal structure of Mabinlin II: a novel structural type of sweet proteins and the main structural basis for its sweetness.</title>
        <authorList>
            <person name="Li D.F."/>
            <person name="Jiang P."/>
            <person name="Zhu D.Y."/>
            <person name="Hu Y."/>
            <person name="Max M."/>
            <person name="Wang D.C."/>
        </authorList>
    </citation>
    <scope>X-RAY CRYSTALLOGRAPHY (1.7 ANGSTROMS) OF 36-68 AND 83-154</scope>
    <scope>DISULFIDE BONDS</scope>
</reference>
<keyword id="KW-0002">3D-structure</keyword>
<keyword id="KW-0903">Direct protein sequencing</keyword>
<keyword id="KW-1015">Disulfide bond</keyword>
<keyword id="KW-0873">Pyrrolidone carboxylic acid</keyword>
<keyword id="KW-0708">Seed storage protein</keyword>
<keyword id="KW-0732">Signal</keyword>
<keyword id="KW-0758">Storage protein</keyword>
<keyword id="KW-0776">Taste-modifying protein</keyword>
<comment type="function">
    <text>Heat stable 2S seed storage protein having sweetness-inducing activity.</text>
</comment>
<comment type="subunit">
    <text>Heterodimer of a small A and a large B chain linked by disulfide bonds.</text>
</comment>
<comment type="similarity">
    <text evidence="4">Belongs to the 2S seed storage albumins family.</text>
</comment>
<organism>
    <name type="scientific">Capparis masaikai</name>
    <name type="common">Mabinlang</name>
    <dbReference type="NCBI Taxonomy" id="13395"/>
    <lineage>
        <taxon>Eukaryota</taxon>
        <taxon>Viridiplantae</taxon>
        <taxon>Streptophyta</taxon>
        <taxon>Embryophyta</taxon>
        <taxon>Tracheophyta</taxon>
        <taxon>Spermatophyta</taxon>
        <taxon>Magnoliopsida</taxon>
        <taxon>eudicotyledons</taxon>
        <taxon>Gunneridae</taxon>
        <taxon>Pentapetalae</taxon>
        <taxon>rosids</taxon>
        <taxon>malvids</taxon>
        <taxon>Brassicales</taxon>
        <taxon>Capparaceae</taxon>
        <taxon>Capparis</taxon>
    </lineage>
</organism>
<sequence length="155" mass="18089">MAKLIFLFATLALFVLLANASIQTTVIEVDEEEDNQLWRCQRQFLQHQRLRACQRFIHRRAQFGGQPDELEDEVEDDNDDENQPRRPALRQCCNQLRQVDRPCVCPVLRQAAQQVLQRQIIQGPQQLRRLFDAARNLPNICNIPNIGACPFRAWP</sequence>
<proteinExistence type="evidence at protein level"/>
<name>2SS2_CAPMA</name>
<accession>P30233</accession>
<accession>O04774</accession>
<evidence type="ECO:0000255" key="1"/>
<evidence type="ECO:0000256" key="2">
    <source>
        <dbReference type="SAM" id="MobiDB-lite"/>
    </source>
</evidence>
<evidence type="ECO:0000269" key="3">
    <source>
    </source>
</evidence>
<evidence type="ECO:0000305" key="4"/>
<evidence type="ECO:0007829" key="5">
    <source>
        <dbReference type="PDB" id="2DS2"/>
    </source>
</evidence>
<dbReference type="EMBL" id="D83997">
    <property type="protein sequence ID" value="BAA12204.1"/>
    <property type="molecule type" value="mRNA"/>
</dbReference>
<dbReference type="PIR" id="JC5379">
    <property type="entry name" value="JC5379"/>
</dbReference>
<dbReference type="PIR" id="S28842">
    <property type="entry name" value="S28842"/>
</dbReference>
<dbReference type="PIR" id="S28843">
    <property type="entry name" value="S28843"/>
</dbReference>
<dbReference type="PDB" id="2DS2">
    <property type="method" value="X-ray"/>
    <property type="resolution" value="1.70 A"/>
    <property type="chains" value="A/C=36-68, B/D=83-154"/>
</dbReference>
<dbReference type="PDBsum" id="2DS2"/>
<dbReference type="SMR" id="P30233"/>
<dbReference type="EvolutionaryTrace" id="P30233"/>
<dbReference type="GO" id="GO:0045735">
    <property type="term" value="F:nutrient reservoir activity"/>
    <property type="evidence" value="ECO:0007669"/>
    <property type="project" value="UniProtKB-KW"/>
</dbReference>
<dbReference type="CDD" id="cd00261">
    <property type="entry name" value="AAI_SS"/>
    <property type="match status" value="1"/>
</dbReference>
<dbReference type="Gene3D" id="1.10.110.10">
    <property type="entry name" value="Plant lipid-transfer and hydrophobic proteins"/>
    <property type="match status" value="1"/>
</dbReference>
<dbReference type="InterPro" id="IPR036312">
    <property type="entry name" value="Bifun_inhib/LTP/seed_sf"/>
</dbReference>
<dbReference type="InterPro" id="IPR016140">
    <property type="entry name" value="Bifunc_inhib/LTP/seed_store"/>
</dbReference>
<dbReference type="InterPro" id="IPR000617">
    <property type="entry name" value="Napin/2SS/CON"/>
</dbReference>
<dbReference type="PANTHER" id="PTHR35496">
    <property type="entry name" value="2S SEED STORAGE PROTEIN 1-RELATED"/>
    <property type="match status" value="1"/>
</dbReference>
<dbReference type="PANTHER" id="PTHR35496:SF20">
    <property type="entry name" value="2S SEED STORAGE PROTEIN 1-RELATED"/>
    <property type="match status" value="1"/>
</dbReference>
<dbReference type="Pfam" id="PF00234">
    <property type="entry name" value="Tryp_alpha_amyl"/>
    <property type="match status" value="1"/>
</dbReference>
<dbReference type="PRINTS" id="PR00496">
    <property type="entry name" value="NAPIN"/>
</dbReference>
<dbReference type="SMART" id="SM00499">
    <property type="entry name" value="AAI"/>
    <property type="match status" value="1"/>
</dbReference>
<dbReference type="SUPFAM" id="SSF47699">
    <property type="entry name" value="Bifunctional inhibitor/lipid-transfer protein/seed storage 2S albumin"/>
    <property type="match status" value="1"/>
</dbReference>
<protein>
    <recommendedName>
        <fullName>Sweet protein mabinlin-2</fullName>
    </recommendedName>
    <alternativeName>
        <fullName>Mabinlin II</fullName>
        <shortName>MAB II</shortName>
    </alternativeName>
    <component>
        <recommendedName>
            <fullName>Sweet protein mabinlin-2 chain A</fullName>
        </recommendedName>
    </component>
    <component>
        <recommendedName>
            <fullName>Sweet protein mabinlin-2 chain B</fullName>
        </recommendedName>
    </component>
</protein>